<accession>P08874</accession>
<comment type="function">
    <text evidence="3">Ambiactive repressor and activator of the transcription of genes expressed during the transition state between vegetative growth and the onset of stationary phase and sporulation. It controls the expression of genes spovG and tycA. AbrB binds to the tycA promoter region at two A- and T-rich sites, it may be the sole repressor of tycA transcription.</text>
</comment>
<comment type="subunit">
    <text evidence="4">Interacts with BrxC.</text>
</comment>
<comment type="interaction">
    <interactant intactId="EBI-2121787">
        <id>P08874</id>
    </interactant>
    <interactant intactId="EBI-2121787">
        <id>P08874</id>
        <label>abrB</label>
    </interactant>
    <organismsDiffer>false</organismsDiffer>
    <experiments>4</experiments>
</comment>
<comment type="interaction">
    <interactant intactId="EBI-2121787">
        <id>P08874</id>
    </interactant>
    <interactant intactId="EBI-15732529">
        <id>O31697</id>
        <label>ykzF</label>
    </interactant>
    <organismsDiffer>false</organismsDiffer>
    <experiments>2</experiments>
</comment>
<comment type="similarity">
    <text evidence="6">To B.subtilis Abh and SpoVT.</text>
</comment>
<comment type="caution">
    <text evidence="6">It is uncertain whether Met-1 or Met-3 is the initiator.</text>
</comment>
<comment type="sequence caution" evidence="6">
    <conflict type="erroneous initiation">
        <sequence resource="EMBL-CDS" id="AAA22195"/>
    </conflict>
    <text>Truncated N-terminus.</text>
</comment>
<comment type="sequence caution" evidence="6">
    <conflict type="erroneous initiation">
        <sequence resource="EMBL-CDS" id="CAA43955"/>
    </conflict>
    <text>Truncated N-terminus.</text>
</comment>
<name>ABRB_BACSU</name>
<feature type="chain" id="PRO_0000064431" description="Transition state regulatory protein AbrB">
    <location>
        <begin position="1"/>
        <end position="96"/>
    </location>
</feature>
<feature type="domain" description="SpoVT-AbrB" evidence="1">
    <location>
        <begin position="7"/>
        <end position="52"/>
    </location>
</feature>
<feature type="mutagenesis site" description="Loss of DNA-binding activity." evidence="2">
    <original>C</original>
    <variation>Y</variation>
    <location>
        <position position="56"/>
    </location>
</feature>
<feature type="strand" evidence="7">
    <location>
        <begin position="8"/>
        <end position="11"/>
    </location>
</feature>
<feature type="turn" evidence="8">
    <location>
        <begin position="13"/>
        <end position="15"/>
    </location>
</feature>
<feature type="strand" evidence="7">
    <location>
        <begin position="17"/>
        <end position="19"/>
    </location>
</feature>
<feature type="helix" evidence="7">
    <location>
        <begin position="22"/>
        <end position="27"/>
    </location>
</feature>
<feature type="strand" evidence="7">
    <location>
        <begin position="35"/>
        <end position="41"/>
    </location>
</feature>
<feature type="strand" evidence="7">
    <location>
        <begin position="44"/>
        <end position="49"/>
    </location>
</feature>
<feature type="helix" evidence="9">
    <location>
        <begin position="52"/>
        <end position="54"/>
    </location>
</feature>
<feature type="turn" evidence="10">
    <location>
        <begin position="57"/>
        <end position="59"/>
    </location>
</feature>
<feature type="strand" evidence="10">
    <location>
        <begin position="74"/>
        <end position="76"/>
    </location>
</feature>
<feature type="helix" evidence="10">
    <location>
        <begin position="78"/>
        <end position="93"/>
    </location>
</feature>
<proteinExistence type="evidence at protein level"/>
<dbReference type="EMBL" id="X12820">
    <property type="protein sequence ID" value="CAA31307.1"/>
    <property type="molecule type" value="Genomic_DNA"/>
</dbReference>
<dbReference type="EMBL" id="M26917">
    <property type="protein sequence ID" value="AAA22195.1"/>
    <property type="status" value="ALT_INIT"/>
    <property type="molecule type" value="Genomic_DNA"/>
</dbReference>
<dbReference type="EMBL" id="D26185">
    <property type="protein sequence ID" value="BAA05272.1"/>
    <property type="molecule type" value="Genomic_DNA"/>
</dbReference>
<dbReference type="EMBL" id="X61953">
    <property type="protein sequence ID" value="CAA43955.1"/>
    <property type="status" value="ALT_INIT"/>
    <property type="molecule type" value="Genomic_DNA"/>
</dbReference>
<dbReference type="EMBL" id="AL009126">
    <property type="protein sequence ID" value="CAB11813.1"/>
    <property type="molecule type" value="Genomic_DNA"/>
</dbReference>
<dbReference type="PIR" id="S03096">
    <property type="entry name" value="S03096"/>
</dbReference>
<dbReference type="RefSeq" id="NP_387918.1">
    <property type="nucleotide sequence ID" value="NC_000964.3"/>
</dbReference>
<dbReference type="RefSeq" id="WP_003226760.1">
    <property type="nucleotide sequence ID" value="NZ_OZ025638.1"/>
</dbReference>
<dbReference type="PDB" id="1YFB">
    <property type="method" value="NMR"/>
    <property type="chains" value="A/B=2-53"/>
</dbReference>
<dbReference type="PDB" id="1YSF">
    <property type="method" value="NMR"/>
    <property type="chains" value="A/B=2-53"/>
</dbReference>
<dbReference type="PDB" id="1Z0R">
    <property type="method" value="NMR"/>
    <property type="chains" value="A/B=3-55"/>
</dbReference>
<dbReference type="PDB" id="2K1N">
    <property type="method" value="NMR"/>
    <property type="chains" value="A/B/C/D=3-57"/>
</dbReference>
<dbReference type="PDB" id="2MJG">
    <property type="method" value="NMR"/>
    <property type="chains" value="A/B=54-96"/>
</dbReference>
<dbReference type="PDB" id="2RO4">
    <property type="method" value="NMR"/>
    <property type="chains" value="A/B=3-55"/>
</dbReference>
<dbReference type="PDBsum" id="1YFB"/>
<dbReference type="PDBsum" id="1YSF"/>
<dbReference type="PDBsum" id="1Z0R"/>
<dbReference type="PDBsum" id="2K1N"/>
<dbReference type="PDBsum" id="2MJG"/>
<dbReference type="PDBsum" id="2RO4"/>
<dbReference type="BMRB" id="P08874"/>
<dbReference type="SMR" id="P08874"/>
<dbReference type="DIP" id="DIP-46306N"/>
<dbReference type="FunCoup" id="P08874">
    <property type="interactions" value="62"/>
</dbReference>
<dbReference type="IntAct" id="P08874">
    <property type="interactions" value="1"/>
</dbReference>
<dbReference type="STRING" id="224308.BSU00370"/>
<dbReference type="jPOST" id="P08874"/>
<dbReference type="PaxDb" id="224308-BSU00370"/>
<dbReference type="EnsemblBacteria" id="CAB11813">
    <property type="protein sequence ID" value="CAB11813"/>
    <property type="gene ID" value="BSU_00370"/>
</dbReference>
<dbReference type="GeneID" id="86871202"/>
<dbReference type="GeneID" id="937009"/>
<dbReference type="KEGG" id="bsu:BSU00370"/>
<dbReference type="PATRIC" id="fig|224308.43.peg.38"/>
<dbReference type="eggNOG" id="COG2002">
    <property type="taxonomic scope" value="Bacteria"/>
</dbReference>
<dbReference type="InParanoid" id="P08874"/>
<dbReference type="OrthoDB" id="9782993at2"/>
<dbReference type="PhylomeDB" id="P08874"/>
<dbReference type="BioCyc" id="BSUB:BSU00370-MONOMER"/>
<dbReference type="EvolutionaryTrace" id="P08874"/>
<dbReference type="Proteomes" id="UP000001570">
    <property type="component" value="Chromosome"/>
</dbReference>
<dbReference type="GO" id="GO:0003677">
    <property type="term" value="F:DNA binding"/>
    <property type="evidence" value="ECO:0007669"/>
    <property type="project" value="UniProtKB-KW"/>
</dbReference>
<dbReference type="GO" id="GO:0042802">
    <property type="term" value="F:identical protein binding"/>
    <property type="evidence" value="ECO:0000353"/>
    <property type="project" value="IntAct"/>
</dbReference>
<dbReference type="GO" id="GO:0045892">
    <property type="term" value="P:negative regulation of DNA-templated transcription"/>
    <property type="evidence" value="ECO:0000314"/>
    <property type="project" value="CACAO"/>
</dbReference>
<dbReference type="GO" id="GO:0043937">
    <property type="term" value="P:regulation of sporulation"/>
    <property type="evidence" value="ECO:0000316"/>
    <property type="project" value="CACAO"/>
</dbReference>
<dbReference type="GO" id="GO:0030435">
    <property type="term" value="P:sporulation resulting in formation of a cellular spore"/>
    <property type="evidence" value="ECO:0007669"/>
    <property type="project" value="UniProtKB-KW"/>
</dbReference>
<dbReference type="FunFam" id="2.10.260.10:FF:000001">
    <property type="entry name" value="Stage V sporulation protein T"/>
    <property type="match status" value="1"/>
</dbReference>
<dbReference type="Gene3D" id="2.10.260.10">
    <property type="match status" value="1"/>
</dbReference>
<dbReference type="InterPro" id="IPR040678">
    <property type="entry name" value="AbrB_C"/>
</dbReference>
<dbReference type="InterPro" id="IPR052731">
    <property type="entry name" value="B_subtilis_Trans_State_Reg"/>
</dbReference>
<dbReference type="InterPro" id="IPR007159">
    <property type="entry name" value="SpoVT-AbrB_dom"/>
</dbReference>
<dbReference type="InterPro" id="IPR037914">
    <property type="entry name" value="SpoVT-AbrB_sf"/>
</dbReference>
<dbReference type="NCBIfam" id="TIGR01439">
    <property type="entry name" value="lp_hng_hel_AbrB"/>
    <property type="match status" value="1"/>
</dbReference>
<dbReference type="PANTHER" id="PTHR36432">
    <property type="match status" value="1"/>
</dbReference>
<dbReference type="PANTHER" id="PTHR36432:SF4">
    <property type="entry name" value="TRANSITION STATE REGULATOR ABH-RELATED"/>
    <property type="match status" value="1"/>
</dbReference>
<dbReference type="Pfam" id="PF18277">
    <property type="entry name" value="AbrB_C"/>
    <property type="match status" value="1"/>
</dbReference>
<dbReference type="Pfam" id="PF04014">
    <property type="entry name" value="MazE_antitoxin"/>
    <property type="match status" value="1"/>
</dbReference>
<dbReference type="SMART" id="SM00966">
    <property type="entry name" value="SpoVT_AbrB"/>
    <property type="match status" value="1"/>
</dbReference>
<dbReference type="SUPFAM" id="SSF89447">
    <property type="entry name" value="AbrB/MazE/MraZ-like"/>
    <property type="match status" value="1"/>
</dbReference>
<dbReference type="PROSITE" id="PS51740">
    <property type="entry name" value="SPOVT_ABRB"/>
    <property type="match status" value="1"/>
</dbReference>
<keyword id="KW-0002">3D-structure</keyword>
<keyword id="KW-0010">Activator</keyword>
<keyword id="KW-0238">DNA-binding</keyword>
<keyword id="KW-1185">Reference proteome</keyword>
<keyword id="KW-0678">Repressor</keyword>
<keyword id="KW-0749">Sporulation</keyword>
<keyword id="KW-0804">Transcription</keyword>
<keyword id="KW-0805">Transcription regulation</keyword>
<gene>
    <name type="primary">abrB</name>
    <name type="synonym">cpsX</name>
    <name type="ordered locus">BSU00370</name>
</gene>
<sequence length="96" mass="10773">MFMKSTGIVRKVDELGRVVIPIELRRTLGIAEKDALEIYVDDEKIILKKYKPNMTCQVTGEVSDDNLKLAGGKLVLSKEGAEQIISEIQNQLQNLK</sequence>
<reference key="1">
    <citation type="journal article" date="1988" name="Mol. Microbiol.">
        <title>Structure of the gene for the transition state regulator, abrB: regulator synthesis is controlled by the spo0A sporulation gene in Bacillus subtilis.</title>
        <authorList>
            <person name="Perego M."/>
            <person name="Spiegelman G.B."/>
            <person name="Hoch J.A."/>
        </authorList>
    </citation>
    <scope>NUCLEOTIDE SEQUENCE [GENOMIC DNA]</scope>
    <source>
        <strain>168</strain>
    </source>
</reference>
<reference key="2">
    <citation type="journal article" date="1989" name="Proc. Natl. Acad. Sci. U.S.A.">
        <title>AbrB, a regulator of gene expression in Bacillus, interacts with the transcription initiation regions of a sporulation gene and an antibiotic biosynthesis gene.</title>
        <authorList>
            <person name="Robertson J.R."/>
            <person name="Gocht M."/>
            <person name="Marahiel M.A."/>
            <person name="Zuber P."/>
        </authorList>
    </citation>
    <scope>NUCLEOTIDE SEQUENCE [GENOMIC DNA]</scope>
</reference>
<reference key="3">
    <citation type="journal article" date="1994" name="DNA Res.">
        <title>Systematic sequencing of the 180 kilobase region of the Bacillus subtilis chromosome containing the replication origin.</title>
        <authorList>
            <person name="Ogasawara N."/>
            <person name="Nakai S."/>
            <person name="Yoshikawa H."/>
        </authorList>
    </citation>
    <scope>NUCLEOTIDE SEQUENCE [GENOMIC DNA]</scope>
    <source>
        <strain>168</strain>
    </source>
</reference>
<reference key="4">
    <citation type="journal article" date="1997" name="Nature">
        <title>The complete genome sequence of the Gram-positive bacterium Bacillus subtilis.</title>
        <authorList>
            <person name="Kunst F."/>
            <person name="Ogasawara N."/>
            <person name="Moszer I."/>
            <person name="Albertini A.M."/>
            <person name="Alloni G."/>
            <person name="Azevedo V."/>
            <person name="Bertero M.G."/>
            <person name="Bessieres P."/>
            <person name="Bolotin A."/>
            <person name="Borchert S."/>
            <person name="Borriss R."/>
            <person name="Boursier L."/>
            <person name="Brans A."/>
            <person name="Braun M."/>
            <person name="Brignell S.C."/>
            <person name="Bron S."/>
            <person name="Brouillet S."/>
            <person name="Bruschi C.V."/>
            <person name="Caldwell B."/>
            <person name="Capuano V."/>
            <person name="Carter N.M."/>
            <person name="Choi S.-K."/>
            <person name="Codani J.-J."/>
            <person name="Connerton I.F."/>
            <person name="Cummings N.J."/>
            <person name="Daniel R.A."/>
            <person name="Denizot F."/>
            <person name="Devine K.M."/>
            <person name="Duesterhoeft A."/>
            <person name="Ehrlich S.D."/>
            <person name="Emmerson P.T."/>
            <person name="Entian K.-D."/>
            <person name="Errington J."/>
            <person name="Fabret C."/>
            <person name="Ferrari E."/>
            <person name="Foulger D."/>
            <person name="Fritz C."/>
            <person name="Fujita M."/>
            <person name="Fujita Y."/>
            <person name="Fuma S."/>
            <person name="Galizzi A."/>
            <person name="Galleron N."/>
            <person name="Ghim S.-Y."/>
            <person name="Glaser P."/>
            <person name="Goffeau A."/>
            <person name="Golightly E.J."/>
            <person name="Grandi G."/>
            <person name="Guiseppi G."/>
            <person name="Guy B.J."/>
            <person name="Haga K."/>
            <person name="Haiech J."/>
            <person name="Harwood C.R."/>
            <person name="Henaut A."/>
            <person name="Hilbert H."/>
            <person name="Holsappel S."/>
            <person name="Hosono S."/>
            <person name="Hullo M.-F."/>
            <person name="Itaya M."/>
            <person name="Jones L.-M."/>
            <person name="Joris B."/>
            <person name="Karamata D."/>
            <person name="Kasahara Y."/>
            <person name="Klaerr-Blanchard M."/>
            <person name="Klein C."/>
            <person name="Kobayashi Y."/>
            <person name="Koetter P."/>
            <person name="Koningstein G."/>
            <person name="Krogh S."/>
            <person name="Kumano M."/>
            <person name="Kurita K."/>
            <person name="Lapidus A."/>
            <person name="Lardinois S."/>
            <person name="Lauber J."/>
            <person name="Lazarevic V."/>
            <person name="Lee S.-M."/>
            <person name="Levine A."/>
            <person name="Liu H."/>
            <person name="Masuda S."/>
            <person name="Mauel C."/>
            <person name="Medigue C."/>
            <person name="Medina N."/>
            <person name="Mellado R.P."/>
            <person name="Mizuno M."/>
            <person name="Moestl D."/>
            <person name="Nakai S."/>
            <person name="Noback M."/>
            <person name="Noone D."/>
            <person name="O'Reilly M."/>
            <person name="Ogawa K."/>
            <person name="Ogiwara A."/>
            <person name="Oudega B."/>
            <person name="Park S.-H."/>
            <person name="Parro V."/>
            <person name="Pohl T.M."/>
            <person name="Portetelle D."/>
            <person name="Porwollik S."/>
            <person name="Prescott A.M."/>
            <person name="Presecan E."/>
            <person name="Pujic P."/>
            <person name="Purnelle B."/>
            <person name="Rapoport G."/>
            <person name="Rey M."/>
            <person name="Reynolds S."/>
            <person name="Rieger M."/>
            <person name="Rivolta C."/>
            <person name="Rocha E."/>
            <person name="Roche B."/>
            <person name="Rose M."/>
            <person name="Sadaie Y."/>
            <person name="Sato T."/>
            <person name="Scanlan E."/>
            <person name="Schleich S."/>
            <person name="Schroeter R."/>
            <person name="Scoffone F."/>
            <person name="Sekiguchi J."/>
            <person name="Sekowska A."/>
            <person name="Seror S.J."/>
            <person name="Serror P."/>
            <person name="Shin B.-S."/>
            <person name="Soldo B."/>
            <person name="Sorokin A."/>
            <person name="Tacconi E."/>
            <person name="Takagi T."/>
            <person name="Takahashi H."/>
            <person name="Takemaru K."/>
            <person name="Takeuchi M."/>
            <person name="Tamakoshi A."/>
            <person name="Tanaka T."/>
            <person name="Terpstra P."/>
            <person name="Tognoni A."/>
            <person name="Tosato V."/>
            <person name="Uchiyama S."/>
            <person name="Vandenbol M."/>
            <person name="Vannier F."/>
            <person name="Vassarotti A."/>
            <person name="Viari A."/>
            <person name="Wambutt R."/>
            <person name="Wedler E."/>
            <person name="Wedler H."/>
            <person name="Weitzenegger T."/>
            <person name="Winters P."/>
            <person name="Wipat A."/>
            <person name="Yamamoto H."/>
            <person name="Yamane K."/>
            <person name="Yasumoto K."/>
            <person name="Yata K."/>
            <person name="Yoshida K."/>
            <person name="Yoshikawa H.-F."/>
            <person name="Zumstein E."/>
            <person name="Yoshikawa H."/>
            <person name="Danchin A."/>
        </authorList>
    </citation>
    <scope>NUCLEOTIDE SEQUENCE [LARGE SCALE GENOMIC DNA]</scope>
    <source>
        <strain>168</strain>
    </source>
</reference>
<reference key="5">
    <citation type="journal article" date="1989" name="EMBO J.">
        <title>The transition state transcription regulator abrB of Bacillus subtilis is a DNA binding protein.</title>
        <authorList>
            <person name="Strauch M.A."/>
            <person name="Spiegelman G.B."/>
            <person name="Perego M."/>
            <person name="Johnson W.C."/>
            <person name="Burbulys D."/>
            <person name="Hoch J.A."/>
        </authorList>
    </citation>
    <scope>FUNCTION</scope>
</reference>
<reference key="6">
    <citation type="journal article" date="1991" name="FEBS Lett.">
        <title>Mutant analysis of interaction of the Bacillus subtilis transcription regulator AbrB with the antibiotic biosynthesis gene tycA.</title>
        <authorList>
            <person name="Fuerbass R."/>
            <person name="Marahiel M.A."/>
        </authorList>
    </citation>
    <scope>CHARACTERIZATION</scope>
    <scope>MUTAGENESIS OF CYS-56</scope>
</reference>
<reference key="7">
    <citation type="journal article" date="2004" name="Mol. Microbiol.">
        <title>Identification of AbrB-regulated genes involved in biofilm formation by Bacillus subtilis.</title>
        <authorList>
            <person name="Hamon M.A."/>
            <person name="Stanley N.R."/>
            <person name="Britton R.A."/>
            <person name="Grossman A.D."/>
            <person name="Lazazzera B.A."/>
        </authorList>
    </citation>
    <scope>ABRB-REGULATED GENES</scope>
</reference>
<reference key="8">
    <citation type="journal article" date="2021" name="Redox Biol.">
        <title>The Bacillus subtilis monothiol bacilliredoxin BrxC (YtxJ) and the Bdr (YpdA) disulfide reductase reduce S-bacillithiolated proteins.</title>
        <authorList>
            <person name="Gaballa A."/>
            <person name="Su T.T."/>
            <person name="Helmann J.D."/>
        </authorList>
    </citation>
    <scope>INTERACTION WITH BRXC</scope>
    <scope>IDENTIFICATION BY MASS SPECTROMETRY</scope>
    <source>
        <strain evidence="5">168 / CU1065</strain>
    </source>
</reference>
<organism>
    <name type="scientific">Bacillus subtilis (strain 168)</name>
    <dbReference type="NCBI Taxonomy" id="224308"/>
    <lineage>
        <taxon>Bacteria</taxon>
        <taxon>Bacillati</taxon>
        <taxon>Bacillota</taxon>
        <taxon>Bacilli</taxon>
        <taxon>Bacillales</taxon>
        <taxon>Bacillaceae</taxon>
        <taxon>Bacillus</taxon>
    </lineage>
</organism>
<protein>
    <recommendedName>
        <fullName>Transition state regulatory protein AbrB</fullName>
    </recommendedName>
</protein>
<evidence type="ECO:0000255" key="1">
    <source>
        <dbReference type="PROSITE-ProRule" id="PRU01076"/>
    </source>
</evidence>
<evidence type="ECO:0000269" key="2">
    <source>
    </source>
</evidence>
<evidence type="ECO:0000269" key="3">
    <source>
    </source>
</evidence>
<evidence type="ECO:0000269" key="4">
    <source>
    </source>
</evidence>
<evidence type="ECO:0000303" key="5">
    <source>
    </source>
</evidence>
<evidence type="ECO:0000305" key="6"/>
<evidence type="ECO:0007829" key="7">
    <source>
        <dbReference type="PDB" id="1YFB"/>
    </source>
</evidence>
<evidence type="ECO:0007829" key="8">
    <source>
        <dbReference type="PDB" id="1Z0R"/>
    </source>
</evidence>
<evidence type="ECO:0007829" key="9">
    <source>
        <dbReference type="PDB" id="2K1N"/>
    </source>
</evidence>
<evidence type="ECO:0007829" key="10">
    <source>
        <dbReference type="PDB" id="2MJG"/>
    </source>
</evidence>